<sequence length="508" mass="54207">MAISLSAPRTTELKPRIVVFGVGGAGGNAVNNMIEAGLEGVEFVVANTDAQQLQFAKTDRRIQLGVQITQGLGAGAHPEVGMSAAEESFPEIGEHLDGAHMVFITAGMGGGTGTGAAPIIAKCARERGILTVGVVTKPFHFEGRHRMRLADSGIQELQRYVDTLIVIPNQNLFRVANERTTFAEAFGMADQVLHSGVRSITDLMVLPGLINLDFADVRTVMTEMGKAMMGTGEGTGEDRALMAAQNAIANPLLDEVSLKGAKAVLVNVTGGMDMTLLEVDEAANAISDQVDPEANIIFGAAFDPSLEGVIRVSVVATGMDGASIAQIEPKPVSRNISAAPLIAETSRPAPQPEPARPTARYEAARPAERPVAFAPEPAPEPEIVMSAPQPEPEAELYYDEPTVAEEPRVSAAPARSVNRIVDPLVDDVAEEPLFPENNYYEERRPQKQGGFFSMFGGGRQRYEQQASAPQAQARSAQSARPQLQPIETPQADDAEDLEIPSFLRRLAN</sequence>
<keyword id="KW-0131">Cell cycle</keyword>
<keyword id="KW-0132">Cell division</keyword>
<keyword id="KW-0963">Cytoplasm</keyword>
<keyword id="KW-0342">GTP-binding</keyword>
<keyword id="KW-0547">Nucleotide-binding</keyword>
<keyword id="KW-1185">Reference proteome</keyword>
<keyword id="KW-0717">Septation</keyword>
<proteinExistence type="inferred from homology"/>
<dbReference type="EMBL" id="U40273">
    <property type="protein sequence ID" value="AAC44223.1"/>
    <property type="molecule type" value="Genomic_DNA"/>
</dbReference>
<dbReference type="EMBL" id="CP001340">
    <property type="protein sequence ID" value="ACL96088.1"/>
    <property type="molecule type" value="Genomic_DNA"/>
</dbReference>
<dbReference type="RefSeq" id="WP_010920397.1">
    <property type="nucleotide sequence ID" value="NC_011916.1"/>
</dbReference>
<dbReference type="RefSeq" id="YP_002517996.1">
    <property type="nucleotide sequence ID" value="NC_011916.1"/>
</dbReference>
<dbReference type="SMR" id="B8H080"/>
<dbReference type="IntAct" id="B8H080">
    <property type="interactions" value="1"/>
</dbReference>
<dbReference type="GeneID" id="7332973"/>
<dbReference type="KEGG" id="ccs:CCNA_02623"/>
<dbReference type="PATRIC" id="fig|565050.3.peg.2572"/>
<dbReference type="HOGENOM" id="CLU_024865_5_2_5"/>
<dbReference type="OrthoDB" id="9813375at2"/>
<dbReference type="PhylomeDB" id="B8H080"/>
<dbReference type="Proteomes" id="UP000001364">
    <property type="component" value="Chromosome"/>
</dbReference>
<dbReference type="GO" id="GO:0032153">
    <property type="term" value="C:cell division site"/>
    <property type="evidence" value="ECO:0007669"/>
    <property type="project" value="UniProtKB-UniRule"/>
</dbReference>
<dbReference type="GO" id="GO:0005737">
    <property type="term" value="C:cytoplasm"/>
    <property type="evidence" value="ECO:0007669"/>
    <property type="project" value="UniProtKB-SubCell"/>
</dbReference>
<dbReference type="GO" id="GO:0005525">
    <property type="term" value="F:GTP binding"/>
    <property type="evidence" value="ECO:0007669"/>
    <property type="project" value="UniProtKB-UniRule"/>
</dbReference>
<dbReference type="GO" id="GO:0003924">
    <property type="term" value="F:GTPase activity"/>
    <property type="evidence" value="ECO:0007669"/>
    <property type="project" value="UniProtKB-UniRule"/>
</dbReference>
<dbReference type="GO" id="GO:0000917">
    <property type="term" value="P:division septum assembly"/>
    <property type="evidence" value="ECO:0007669"/>
    <property type="project" value="UniProtKB-KW"/>
</dbReference>
<dbReference type="GO" id="GO:0043093">
    <property type="term" value="P:FtsZ-dependent cytokinesis"/>
    <property type="evidence" value="ECO:0007669"/>
    <property type="project" value="UniProtKB-UniRule"/>
</dbReference>
<dbReference type="GO" id="GO:0051258">
    <property type="term" value="P:protein polymerization"/>
    <property type="evidence" value="ECO:0007669"/>
    <property type="project" value="UniProtKB-UniRule"/>
</dbReference>
<dbReference type="CDD" id="cd02201">
    <property type="entry name" value="FtsZ_type1"/>
    <property type="match status" value="1"/>
</dbReference>
<dbReference type="FunFam" id="3.30.1330.20:FF:000011">
    <property type="entry name" value="Cell division protein FtsZ"/>
    <property type="match status" value="1"/>
</dbReference>
<dbReference type="FunFam" id="3.40.50.1440:FF:000001">
    <property type="entry name" value="Cell division protein FtsZ"/>
    <property type="match status" value="1"/>
</dbReference>
<dbReference type="Gene3D" id="3.30.1330.20">
    <property type="entry name" value="Tubulin/FtsZ, C-terminal domain"/>
    <property type="match status" value="1"/>
</dbReference>
<dbReference type="Gene3D" id="3.40.50.1440">
    <property type="entry name" value="Tubulin/FtsZ, GTPase domain"/>
    <property type="match status" value="1"/>
</dbReference>
<dbReference type="HAMAP" id="MF_00909">
    <property type="entry name" value="FtsZ"/>
    <property type="match status" value="1"/>
</dbReference>
<dbReference type="InterPro" id="IPR000158">
    <property type="entry name" value="Cell_div_FtsZ"/>
</dbReference>
<dbReference type="InterPro" id="IPR020805">
    <property type="entry name" value="Cell_div_FtsZ_CS"/>
</dbReference>
<dbReference type="InterPro" id="IPR045061">
    <property type="entry name" value="FtsZ/CetZ"/>
</dbReference>
<dbReference type="InterPro" id="IPR024757">
    <property type="entry name" value="FtsZ_C"/>
</dbReference>
<dbReference type="InterPro" id="IPR008280">
    <property type="entry name" value="Tub_FtsZ_C"/>
</dbReference>
<dbReference type="InterPro" id="IPR037103">
    <property type="entry name" value="Tubulin/FtsZ-like_C"/>
</dbReference>
<dbReference type="InterPro" id="IPR018316">
    <property type="entry name" value="Tubulin/FtsZ_2-layer-sand-dom"/>
</dbReference>
<dbReference type="InterPro" id="IPR036525">
    <property type="entry name" value="Tubulin/FtsZ_GTPase_sf"/>
</dbReference>
<dbReference type="InterPro" id="IPR003008">
    <property type="entry name" value="Tubulin_FtsZ_GTPase"/>
</dbReference>
<dbReference type="NCBIfam" id="TIGR00065">
    <property type="entry name" value="ftsZ"/>
    <property type="match status" value="1"/>
</dbReference>
<dbReference type="PANTHER" id="PTHR30314">
    <property type="entry name" value="CELL DIVISION PROTEIN FTSZ-RELATED"/>
    <property type="match status" value="1"/>
</dbReference>
<dbReference type="PANTHER" id="PTHR30314:SF3">
    <property type="entry name" value="MITOCHONDRIAL DIVISION PROTEIN FSZA"/>
    <property type="match status" value="1"/>
</dbReference>
<dbReference type="Pfam" id="PF12327">
    <property type="entry name" value="FtsZ_C"/>
    <property type="match status" value="1"/>
</dbReference>
<dbReference type="Pfam" id="PF00091">
    <property type="entry name" value="Tubulin"/>
    <property type="match status" value="1"/>
</dbReference>
<dbReference type="PRINTS" id="PR00423">
    <property type="entry name" value="CELLDVISFTSZ"/>
</dbReference>
<dbReference type="SMART" id="SM00864">
    <property type="entry name" value="Tubulin"/>
    <property type="match status" value="1"/>
</dbReference>
<dbReference type="SMART" id="SM00865">
    <property type="entry name" value="Tubulin_C"/>
    <property type="match status" value="1"/>
</dbReference>
<dbReference type="SUPFAM" id="SSF55307">
    <property type="entry name" value="Tubulin C-terminal domain-like"/>
    <property type="match status" value="1"/>
</dbReference>
<dbReference type="SUPFAM" id="SSF52490">
    <property type="entry name" value="Tubulin nucleotide-binding domain-like"/>
    <property type="match status" value="1"/>
</dbReference>
<dbReference type="PROSITE" id="PS01134">
    <property type="entry name" value="FTSZ_1"/>
    <property type="match status" value="1"/>
</dbReference>
<dbReference type="PROSITE" id="PS01135">
    <property type="entry name" value="FTSZ_2"/>
    <property type="match status" value="1"/>
</dbReference>
<comment type="function">
    <text evidence="1">Essential cell division protein that forms a contractile ring structure (Z ring) at the future cell division site. The regulation of the ring assembly controls the timing and the location of cell division. One of the functions of the FtsZ ring is to recruit other cell division proteins to the septum to produce a new cell wall between the dividing cells. Binds GTP and shows GTPase activity.</text>
</comment>
<comment type="subunit">
    <text evidence="1">Homodimer. Polymerizes to form a dynamic ring structure in a strictly GTP-dependent manner. Interacts directly with several other division proteins.</text>
</comment>
<comment type="subcellular location">
    <subcellularLocation>
        <location evidence="1">Cytoplasm</location>
    </subcellularLocation>
    <text evidence="1">Assembles at midcell at the inner surface of the cytoplasmic membrane.</text>
</comment>
<comment type="similarity">
    <text evidence="1">Belongs to the FtsZ family.</text>
</comment>
<feature type="chain" id="PRO_0000378290" description="Cell division protein FtsZ">
    <location>
        <begin position="1"/>
        <end position="508"/>
    </location>
</feature>
<feature type="region of interest" description="Disordered" evidence="2">
    <location>
        <begin position="342"/>
        <end position="389"/>
    </location>
</feature>
<feature type="region of interest" description="Disordered" evidence="2">
    <location>
        <begin position="428"/>
        <end position="508"/>
    </location>
</feature>
<feature type="compositionally biased region" description="Low complexity" evidence="2">
    <location>
        <begin position="464"/>
        <end position="482"/>
    </location>
</feature>
<feature type="binding site" evidence="1">
    <location>
        <begin position="24"/>
        <end position="28"/>
    </location>
    <ligand>
        <name>GTP</name>
        <dbReference type="ChEBI" id="CHEBI:37565"/>
    </ligand>
</feature>
<feature type="binding site" evidence="1">
    <location>
        <begin position="111"/>
        <end position="113"/>
    </location>
    <ligand>
        <name>GTP</name>
        <dbReference type="ChEBI" id="CHEBI:37565"/>
    </ligand>
</feature>
<feature type="binding site" evidence="1">
    <location>
        <position position="142"/>
    </location>
    <ligand>
        <name>GTP</name>
        <dbReference type="ChEBI" id="CHEBI:37565"/>
    </ligand>
</feature>
<feature type="binding site" evidence="1">
    <location>
        <position position="146"/>
    </location>
    <ligand>
        <name>GTP</name>
        <dbReference type="ChEBI" id="CHEBI:37565"/>
    </ligand>
</feature>
<feature type="binding site" evidence="1">
    <location>
        <position position="190"/>
    </location>
    <ligand>
        <name>GTP</name>
        <dbReference type="ChEBI" id="CHEBI:37565"/>
    </ligand>
</feature>
<feature type="sequence conflict" description="In Ref. 1; AAC44223." evidence="3" ref="1">
    <original>G</original>
    <variation>A</variation>
    <location>
        <position position="236"/>
    </location>
</feature>
<evidence type="ECO:0000255" key="1">
    <source>
        <dbReference type="HAMAP-Rule" id="MF_00909"/>
    </source>
</evidence>
<evidence type="ECO:0000256" key="2">
    <source>
        <dbReference type="SAM" id="MobiDB-lite"/>
    </source>
</evidence>
<evidence type="ECO:0000305" key="3"/>
<accession>B8H080</accession>
<accession>P52976</accession>
<name>FTSZ_CAUVN</name>
<gene>
    <name evidence="1" type="primary">ftsZ</name>
    <name type="ordered locus">CCNA_02623</name>
</gene>
<organism>
    <name type="scientific">Caulobacter vibrioides (strain NA1000 / CB15N)</name>
    <name type="common">Caulobacter crescentus</name>
    <dbReference type="NCBI Taxonomy" id="565050"/>
    <lineage>
        <taxon>Bacteria</taxon>
        <taxon>Pseudomonadati</taxon>
        <taxon>Pseudomonadota</taxon>
        <taxon>Alphaproteobacteria</taxon>
        <taxon>Caulobacterales</taxon>
        <taxon>Caulobacteraceae</taxon>
        <taxon>Caulobacter</taxon>
    </lineage>
</organism>
<reference key="1">
    <citation type="journal article" date="1996" name="Proc. Natl. Acad. Sci. U.S.A.">
        <title>Cell cycle regulation and cell type-specific localization of the FtsZ division initiation protein in Caulobacter.</title>
        <authorList>
            <person name="Quardokus E."/>
            <person name="Din N."/>
            <person name="Brun Y.V."/>
        </authorList>
    </citation>
    <scope>NUCLEOTIDE SEQUENCE [GENOMIC DNA]</scope>
</reference>
<reference key="2">
    <citation type="journal article" date="2010" name="J. Bacteriol.">
        <title>The genetic basis of laboratory adaptation in Caulobacter crescentus.</title>
        <authorList>
            <person name="Marks M.E."/>
            <person name="Castro-Rojas C.M."/>
            <person name="Teiling C."/>
            <person name="Du L."/>
            <person name="Kapatral V."/>
            <person name="Walunas T.L."/>
            <person name="Crosson S."/>
        </authorList>
    </citation>
    <scope>NUCLEOTIDE SEQUENCE [LARGE SCALE GENOMIC DNA]</scope>
    <source>
        <strain>NA1000 / CB15N</strain>
    </source>
</reference>
<protein>
    <recommendedName>
        <fullName evidence="1">Cell division protein FtsZ</fullName>
    </recommendedName>
</protein>